<evidence type="ECO:0000255" key="1">
    <source>
        <dbReference type="HAMAP-Rule" id="MF_01039"/>
    </source>
</evidence>
<sequence>MIKLVLVRHGESLWNLENRFTGWTDVDLSENGLKEARRAGKILKKNGFVFDVAYTSVLKRAIRTLWIILYEMDLAWIPVFKSWRLNERHYGALQGLNKAETAKKYGEEQVHKWRRFVNVKPPELTKEDTRYPGNEYKYKDLNEEQIPLTENLADTERRVLEEWRGNIAKDLKEGKRVIISAHGNTLRALVKYLDDIPADNVANLNIPTGIPLVYELDEKLKPITHYYLSDKE</sequence>
<comment type="function">
    <text evidence="1">Catalyzes the interconversion of 2-phosphoglycerate and 3-phosphoglycerate.</text>
</comment>
<comment type="catalytic activity">
    <reaction evidence="1">
        <text>(2R)-2-phosphoglycerate = (2R)-3-phosphoglycerate</text>
        <dbReference type="Rhea" id="RHEA:15901"/>
        <dbReference type="ChEBI" id="CHEBI:58272"/>
        <dbReference type="ChEBI" id="CHEBI:58289"/>
        <dbReference type="EC" id="5.4.2.11"/>
    </reaction>
</comment>
<comment type="pathway">
    <text evidence="1">Carbohydrate degradation; glycolysis; pyruvate from D-glyceraldehyde 3-phosphate: step 3/5.</text>
</comment>
<comment type="similarity">
    <text evidence="1">Belongs to the phosphoglycerate mutase family. BPG-dependent PGAM subfamily.</text>
</comment>
<feature type="chain" id="PRO_1000084322" description="2,3-bisphosphoglycerate-dependent phosphoglycerate mutase">
    <location>
        <begin position="1"/>
        <end position="232"/>
    </location>
</feature>
<feature type="active site" description="Tele-phosphohistidine intermediate" evidence="1">
    <location>
        <position position="9"/>
    </location>
</feature>
<feature type="active site" description="Proton donor/acceptor" evidence="1">
    <location>
        <position position="87"/>
    </location>
</feature>
<feature type="binding site" evidence="1">
    <location>
        <begin position="8"/>
        <end position="15"/>
    </location>
    <ligand>
        <name>substrate</name>
    </ligand>
</feature>
<feature type="binding site" evidence="1">
    <location>
        <begin position="21"/>
        <end position="22"/>
    </location>
    <ligand>
        <name>substrate</name>
    </ligand>
</feature>
<feature type="binding site" evidence="1">
    <location>
        <position position="60"/>
    </location>
    <ligand>
        <name>substrate</name>
    </ligand>
</feature>
<feature type="binding site" evidence="1">
    <location>
        <begin position="87"/>
        <end position="90"/>
    </location>
    <ligand>
        <name>substrate</name>
    </ligand>
</feature>
<feature type="binding site" evidence="1">
    <location>
        <position position="98"/>
    </location>
    <ligand>
        <name>substrate</name>
    </ligand>
</feature>
<feature type="binding site" evidence="1">
    <location>
        <begin position="114"/>
        <end position="115"/>
    </location>
    <ligand>
        <name>substrate</name>
    </ligand>
</feature>
<feature type="binding site" evidence="1">
    <location>
        <begin position="183"/>
        <end position="184"/>
    </location>
    <ligand>
        <name>substrate</name>
    </ligand>
</feature>
<feature type="site" description="Transition state stabilizer" evidence="1">
    <location>
        <position position="182"/>
    </location>
</feature>
<accession>A6LUA1</accession>
<keyword id="KW-0312">Gluconeogenesis</keyword>
<keyword id="KW-0324">Glycolysis</keyword>
<keyword id="KW-0413">Isomerase</keyword>
<name>GPMA_CLOB8</name>
<organism>
    <name type="scientific">Clostridium beijerinckii (strain ATCC 51743 / NCIMB 8052)</name>
    <name type="common">Clostridium acetobutylicum</name>
    <dbReference type="NCBI Taxonomy" id="290402"/>
    <lineage>
        <taxon>Bacteria</taxon>
        <taxon>Bacillati</taxon>
        <taxon>Bacillota</taxon>
        <taxon>Clostridia</taxon>
        <taxon>Eubacteriales</taxon>
        <taxon>Clostridiaceae</taxon>
        <taxon>Clostridium</taxon>
    </lineage>
</organism>
<protein>
    <recommendedName>
        <fullName evidence="1">2,3-bisphosphoglycerate-dependent phosphoglycerate mutase</fullName>
        <shortName evidence="1">BPG-dependent PGAM</shortName>
        <shortName evidence="1">PGAM</shortName>
        <shortName evidence="1">Phosphoglyceromutase</shortName>
        <shortName evidence="1">dPGM</shortName>
        <ecNumber evidence="1">5.4.2.11</ecNumber>
    </recommendedName>
</protein>
<gene>
    <name evidence="1" type="primary">gpmA</name>
    <name type="ordered locus">Cbei_1759</name>
</gene>
<proteinExistence type="inferred from homology"/>
<dbReference type="EC" id="5.4.2.11" evidence="1"/>
<dbReference type="EMBL" id="CP000721">
    <property type="protein sequence ID" value="ABR33931.1"/>
    <property type="molecule type" value="Genomic_DNA"/>
</dbReference>
<dbReference type="RefSeq" id="WP_011969083.1">
    <property type="nucleotide sequence ID" value="NC_009617.1"/>
</dbReference>
<dbReference type="SMR" id="A6LUA1"/>
<dbReference type="KEGG" id="cbe:Cbei_1759"/>
<dbReference type="eggNOG" id="COG0588">
    <property type="taxonomic scope" value="Bacteria"/>
</dbReference>
<dbReference type="HOGENOM" id="CLU_033323_1_1_9"/>
<dbReference type="UniPathway" id="UPA00109">
    <property type="reaction ID" value="UER00186"/>
</dbReference>
<dbReference type="Proteomes" id="UP000000565">
    <property type="component" value="Chromosome"/>
</dbReference>
<dbReference type="GO" id="GO:0004619">
    <property type="term" value="F:phosphoglycerate mutase activity"/>
    <property type="evidence" value="ECO:0007669"/>
    <property type="project" value="UniProtKB-EC"/>
</dbReference>
<dbReference type="GO" id="GO:0006094">
    <property type="term" value="P:gluconeogenesis"/>
    <property type="evidence" value="ECO:0007669"/>
    <property type="project" value="UniProtKB-UniRule"/>
</dbReference>
<dbReference type="GO" id="GO:0006096">
    <property type="term" value="P:glycolytic process"/>
    <property type="evidence" value="ECO:0007669"/>
    <property type="project" value="UniProtKB-UniRule"/>
</dbReference>
<dbReference type="CDD" id="cd07067">
    <property type="entry name" value="HP_PGM_like"/>
    <property type="match status" value="1"/>
</dbReference>
<dbReference type="FunFam" id="3.40.50.1240:FF:000003">
    <property type="entry name" value="2,3-bisphosphoglycerate-dependent phosphoglycerate mutase"/>
    <property type="match status" value="1"/>
</dbReference>
<dbReference type="Gene3D" id="3.40.50.1240">
    <property type="entry name" value="Phosphoglycerate mutase-like"/>
    <property type="match status" value="1"/>
</dbReference>
<dbReference type="HAMAP" id="MF_01039">
    <property type="entry name" value="PGAM_GpmA"/>
    <property type="match status" value="1"/>
</dbReference>
<dbReference type="InterPro" id="IPR013078">
    <property type="entry name" value="His_Pase_superF_clade-1"/>
</dbReference>
<dbReference type="InterPro" id="IPR029033">
    <property type="entry name" value="His_PPase_superfam"/>
</dbReference>
<dbReference type="InterPro" id="IPR001345">
    <property type="entry name" value="PG/BPGM_mutase_AS"/>
</dbReference>
<dbReference type="InterPro" id="IPR005952">
    <property type="entry name" value="Phosphogly_mut1"/>
</dbReference>
<dbReference type="NCBIfam" id="TIGR01258">
    <property type="entry name" value="pgm_1"/>
    <property type="match status" value="1"/>
</dbReference>
<dbReference type="NCBIfam" id="NF010713">
    <property type="entry name" value="PRK14115.1"/>
    <property type="match status" value="1"/>
</dbReference>
<dbReference type="PANTHER" id="PTHR11931">
    <property type="entry name" value="PHOSPHOGLYCERATE MUTASE"/>
    <property type="match status" value="1"/>
</dbReference>
<dbReference type="Pfam" id="PF00300">
    <property type="entry name" value="His_Phos_1"/>
    <property type="match status" value="1"/>
</dbReference>
<dbReference type="PIRSF" id="PIRSF000709">
    <property type="entry name" value="6PFK_2-Ptase"/>
    <property type="match status" value="1"/>
</dbReference>
<dbReference type="SMART" id="SM00855">
    <property type="entry name" value="PGAM"/>
    <property type="match status" value="1"/>
</dbReference>
<dbReference type="SUPFAM" id="SSF53254">
    <property type="entry name" value="Phosphoglycerate mutase-like"/>
    <property type="match status" value="1"/>
</dbReference>
<dbReference type="PROSITE" id="PS00175">
    <property type="entry name" value="PG_MUTASE"/>
    <property type="match status" value="1"/>
</dbReference>
<reference key="1">
    <citation type="submission" date="2007-06" db="EMBL/GenBank/DDBJ databases">
        <title>Complete sequence of Clostridium beijerinckii NCIMB 8052.</title>
        <authorList>
            <consortium name="US DOE Joint Genome Institute"/>
            <person name="Copeland A."/>
            <person name="Lucas S."/>
            <person name="Lapidus A."/>
            <person name="Barry K."/>
            <person name="Detter J.C."/>
            <person name="Glavina del Rio T."/>
            <person name="Hammon N."/>
            <person name="Israni S."/>
            <person name="Dalin E."/>
            <person name="Tice H."/>
            <person name="Pitluck S."/>
            <person name="Sims D."/>
            <person name="Brettin T."/>
            <person name="Bruce D."/>
            <person name="Tapia R."/>
            <person name="Brainard J."/>
            <person name="Schmutz J."/>
            <person name="Larimer F."/>
            <person name="Land M."/>
            <person name="Hauser L."/>
            <person name="Kyrpides N."/>
            <person name="Mikhailova N."/>
            <person name="Bennet G."/>
            <person name="Cann I."/>
            <person name="Chen J.-S."/>
            <person name="Contreras A.L."/>
            <person name="Jones D."/>
            <person name="Kashket E."/>
            <person name="Mitchell W."/>
            <person name="Stoddard S."/>
            <person name="Schwarz W."/>
            <person name="Qureshi N."/>
            <person name="Young M."/>
            <person name="Shi Z."/>
            <person name="Ezeji T."/>
            <person name="White B."/>
            <person name="Blaschek H."/>
            <person name="Richardson P."/>
        </authorList>
    </citation>
    <scope>NUCLEOTIDE SEQUENCE [LARGE SCALE GENOMIC DNA]</scope>
    <source>
        <strain>ATCC 51743 / NCIMB 8052</strain>
    </source>
</reference>